<protein>
    <recommendedName>
        <fullName>Beta-defensin 121</fullName>
    </recommendedName>
    <alternativeName>
        <fullName>Defensin, beta 121</fullName>
    </alternativeName>
</protein>
<keyword id="KW-0044">Antibiotic</keyword>
<keyword id="KW-0929">Antimicrobial</keyword>
<keyword id="KW-0211">Defensin</keyword>
<keyword id="KW-1015">Disulfide bond</keyword>
<keyword id="KW-1185">Reference proteome</keyword>
<keyword id="KW-0964">Secreted</keyword>
<keyword id="KW-0732">Signal</keyword>
<dbReference type="EMBL" id="DQ012073">
    <property type="protein sequence ID" value="AAY59804.1"/>
    <property type="molecule type" value="mRNA"/>
</dbReference>
<dbReference type="RefSeq" id="NP_001123239.1">
    <property type="nucleotide sequence ID" value="NM_001129767.1"/>
</dbReference>
<dbReference type="SMR" id="Q30KK6"/>
<dbReference type="FunCoup" id="Q30KK6">
    <property type="interactions" value="12"/>
</dbReference>
<dbReference type="STRING" id="9598.ENSPTRP00000052303"/>
<dbReference type="PaxDb" id="9598-ENSPTRP00000052303"/>
<dbReference type="Ensembl" id="ENSPTRT00000059187.4">
    <property type="protein sequence ID" value="ENSPTRP00000052303.3"/>
    <property type="gene ID" value="ENSPTRG00000030595.5"/>
</dbReference>
<dbReference type="GeneID" id="746082"/>
<dbReference type="KEGG" id="ptr:746082"/>
<dbReference type="CTD" id="245934"/>
<dbReference type="VGNC" id="VGNC:6090">
    <property type="gene designation" value="DEFB121"/>
</dbReference>
<dbReference type="eggNOG" id="ENOG502TDXP">
    <property type="taxonomic scope" value="Eukaryota"/>
</dbReference>
<dbReference type="GeneTree" id="ENSGT00730000111628"/>
<dbReference type="HOGENOM" id="CLU_181906_2_1_1"/>
<dbReference type="InParanoid" id="Q30KK6"/>
<dbReference type="OMA" id="TPAMKCW"/>
<dbReference type="OrthoDB" id="13661at9604"/>
<dbReference type="Proteomes" id="UP000002277">
    <property type="component" value="Chromosome 20"/>
</dbReference>
<dbReference type="Bgee" id="ENSPTRG00000030595">
    <property type="expression patterns" value="Expressed in testis"/>
</dbReference>
<dbReference type="GO" id="GO:0005576">
    <property type="term" value="C:extracellular region"/>
    <property type="evidence" value="ECO:0007669"/>
    <property type="project" value="UniProtKB-SubCell"/>
</dbReference>
<dbReference type="GO" id="GO:0050829">
    <property type="term" value="P:defense response to Gram-negative bacterium"/>
    <property type="evidence" value="ECO:0007669"/>
    <property type="project" value="UniProtKB-ARBA"/>
</dbReference>
<dbReference type="GO" id="GO:0045087">
    <property type="term" value="P:innate immune response"/>
    <property type="evidence" value="ECO:0007669"/>
    <property type="project" value="InterPro"/>
</dbReference>
<dbReference type="Gene3D" id="3.10.360.10">
    <property type="entry name" value="Antimicrobial Peptide, Beta-defensin 2, Chain A"/>
    <property type="match status" value="1"/>
</dbReference>
<dbReference type="InterPro" id="IPR050544">
    <property type="entry name" value="Beta-defensin"/>
</dbReference>
<dbReference type="InterPro" id="IPR025933">
    <property type="entry name" value="Beta_defensin_dom"/>
</dbReference>
<dbReference type="PANTHER" id="PTHR15001:SF8">
    <property type="entry name" value="BETA-DEFENSIN 121"/>
    <property type="match status" value="1"/>
</dbReference>
<dbReference type="PANTHER" id="PTHR15001">
    <property type="entry name" value="BETA-DEFENSIN 123-RELATED"/>
    <property type="match status" value="1"/>
</dbReference>
<dbReference type="Pfam" id="PF13841">
    <property type="entry name" value="Defensin_beta_2"/>
    <property type="match status" value="1"/>
</dbReference>
<proteinExistence type="inferred from homology"/>
<organism>
    <name type="scientific">Pan troglodytes</name>
    <name type="common">Chimpanzee</name>
    <dbReference type="NCBI Taxonomy" id="9598"/>
    <lineage>
        <taxon>Eukaryota</taxon>
        <taxon>Metazoa</taxon>
        <taxon>Chordata</taxon>
        <taxon>Craniata</taxon>
        <taxon>Vertebrata</taxon>
        <taxon>Euteleostomi</taxon>
        <taxon>Mammalia</taxon>
        <taxon>Eutheria</taxon>
        <taxon>Euarchontoglires</taxon>
        <taxon>Primates</taxon>
        <taxon>Haplorrhini</taxon>
        <taxon>Catarrhini</taxon>
        <taxon>Hominidae</taxon>
        <taxon>Pan</taxon>
    </lineage>
</organism>
<comment type="function">
    <text evidence="3">Has antibacterial activity.</text>
</comment>
<comment type="subcellular location">
    <subcellularLocation>
        <location evidence="3">Secreted</location>
    </subcellularLocation>
</comment>
<comment type="similarity">
    <text evidence="3">Belongs to the beta-defensin family.</text>
</comment>
<reference key="1">
    <citation type="journal article" date="2005" name="Physiol. Genomics">
        <title>Cross-species analysis of the mammalian beta-defensin gene family: presence of syntenic gene clusters and preferential expression in the male reproductive tract.</title>
        <authorList>
            <person name="Patil A.A."/>
            <person name="Cai Y."/>
            <person name="Sang Y."/>
            <person name="Blecha F."/>
            <person name="Zhang G."/>
        </authorList>
    </citation>
    <scope>NUCLEOTIDE SEQUENCE [MRNA]</scope>
</reference>
<accession>Q30KK6</accession>
<feature type="signal peptide" evidence="2">
    <location>
        <begin position="1"/>
        <end position="15"/>
    </location>
</feature>
<feature type="chain" id="PRO_0000045350" description="Beta-defensin 121">
    <location>
        <begin position="16"/>
        <end position="76"/>
    </location>
</feature>
<feature type="disulfide bond" evidence="1">
    <location>
        <begin position="23"/>
        <end position="50"/>
    </location>
</feature>
<feature type="disulfide bond" evidence="1">
    <location>
        <begin position="30"/>
        <end position="44"/>
    </location>
</feature>
<feature type="disulfide bond" evidence="1">
    <location>
        <begin position="34"/>
        <end position="51"/>
    </location>
</feature>
<sequence length="76" mass="8511">MKLLLLLLTVTLLLAQVTPVMKCWGKSGRCRTTCKESEVYYILCKTEAKCCVDPKYVPVKPKLTDRNTSLESTSAV</sequence>
<name>DB121_PANTR</name>
<evidence type="ECO:0000250" key="1"/>
<evidence type="ECO:0000255" key="2"/>
<evidence type="ECO:0000305" key="3"/>
<gene>
    <name type="primary">DEFB121</name>
</gene>